<comment type="function">
    <text evidence="1 2 4">Snake phospholipase A2 homolog that lacks enzymatic activity (PubMed:19944711, PubMed:20036276). May display myotoxin activity (Probable). In isolated heart decreases cardiac frequency (PubMed:20036276). Also decreases mean arterial pressure (PubMed:19944711). Does not show antimicrobial activity (PubMed:19944711). Does not change renal parameters (such as perfusion pressure, renal vascular resistance, urinary flow, glomerular filtration rate and sodium tubular transport) (PubMed:20036276).</text>
</comment>
<comment type="subunit">
    <text evidence="1">Homodimer; non-covalently linked.</text>
</comment>
<comment type="subcellular location">
    <subcellularLocation>
        <location evidence="1 2">Secreted</location>
    </subcellularLocation>
</comment>
<comment type="tissue specificity">
    <text evidence="5 6">Expressed by the venom gland.</text>
</comment>
<comment type="similarity">
    <text evidence="4">Belongs to the phospholipase A2 family. Group II subfamily. K49 sub-subfamily.</text>
</comment>
<comment type="caution">
    <text evidence="4">Does not bind calcium as one of the calcium-binding sites is lost (Asp-&gt;Lys which corresponds to 'Lys-49' in the current nomenclature).</text>
</comment>
<protein>
    <recommendedName>
        <fullName evidence="3">Phospholipase A2 homolog BmarPLA2</fullName>
        <shortName>svPLA2 homolog</shortName>
    </recommendedName>
</protein>
<sequence length="33" mass="3505">SLLELGKMILQETGKMPSKSYGAYGCNCGVLGR</sequence>
<reference key="1">
    <citation type="journal article" date="2010" name="Toxicon">
        <title>Antibacterial and antiparasitic effects of Bothrops marajoensis venom and its fractions: phospholipase A2 and L-amino acid oxidase.</title>
        <authorList>
            <person name="Costa Torres A.F."/>
            <person name="Dantas R.T."/>
            <person name="Toyama M.H."/>
            <person name="Diz Filho E.B."/>
            <person name="Zara F.J."/>
            <person name="Rodrigues de Queiroz M.G."/>
            <person name="Pinto Nogueira N.A."/>
            <person name="Rosa de Oliveira M."/>
            <person name="de Oliveira Toyama D."/>
            <person name="Monteiro H.S.A."/>
            <person name="Martins A.M.C."/>
        </authorList>
    </citation>
    <scope>PROTEIN SEQUENCE</scope>
    <scope>FUNCTION</scope>
    <scope>SUBUNIT</scope>
    <scope>SUBCELLULAR LOCATION</scope>
    <source>
        <tissue>Venom</tissue>
    </source>
</reference>
<reference key="2">
    <citation type="journal article" date="2010" name="Toxicon">
        <title>Renal and cardiovascular effects of Bothrops marajoensis venom and phospholipase A2.</title>
        <authorList>
            <person name="Evangelista I.L."/>
            <person name="Martins A.M."/>
            <person name="Nascimento N.R."/>
            <person name="Havt A."/>
            <person name="Evangelista J.S."/>
            <person name="de Noroes T.B."/>
            <person name="Toyama M.H."/>
            <person name="Diz-Filho E.B."/>
            <person name="de Oliveira Toyama D."/>
            <person name="Fonteles M.C."/>
            <person name="Monteiro H.S.A."/>
        </authorList>
    </citation>
    <scope>PROTEIN SEQUENCE</scope>
    <scope>FUNCTION</scope>
    <scope>SUBCELLULAR LOCATION</scope>
    <source>
        <tissue>Venom</tissue>
    </source>
</reference>
<name>PA2H_BOTMA</name>
<organism>
    <name type="scientific">Bothrops marajoensis</name>
    <name type="common">Marajo lancehead</name>
    <dbReference type="NCBI Taxonomy" id="157554"/>
    <lineage>
        <taxon>Eukaryota</taxon>
        <taxon>Metazoa</taxon>
        <taxon>Chordata</taxon>
        <taxon>Craniata</taxon>
        <taxon>Vertebrata</taxon>
        <taxon>Euteleostomi</taxon>
        <taxon>Lepidosauria</taxon>
        <taxon>Squamata</taxon>
        <taxon>Bifurcata</taxon>
        <taxon>Unidentata</taxon>
        <taxon>Episquamata</taxon>
        <taxon>Toxicofera</taxon>
        <taxon>Serpentes</taxon>
        <taxon>Colubroidea</taxon>
        <taxon>Viperidae</taxon>
        <taxon>Crotalinae</taxon>
        <taxon>Bothrops</taxon>
    </lineage>
</organism>
<dbReference type="SMR" id="P0DI92"/>
<dbReference type="GO" id="GO:0005576">
    <property type="term" value="C:extracellular region"/>
    <property type="evidence" value="ECO:0007669"/>
    <property type="project" value="UniProtKB-SubCell"/>
</dbReference>
<dbReference type="GO" id="GO:0004623">
    <property type="term" value="F:phospholipase A2 activity"/>
    <property type="evidence" value="ECO:0007669"/>
    <property type="project" value="InterPro"/>
</dbReference>
<dbReference type="GO" id="GO:0090729">
    <property type="term" value="F:toxin activity"/>
    <property type="evidence" value="ECO:0007669"/>
    <property type="project" value="UniProtKB-KW"/>
</dbReference>
<dbReference type="GO" id="GO:0050482">
    <property type="term" value="P:arachidonate secretion"/>
    <property type="evidence" value="ECO:0007669"/>
    <property type="project" value="InterPro"/>
</dbReference>
<dbReference type="GO" id="GO:0042742">
    <property type="term" value="P:defense response to bacterium"/>
    <property type="evidence" value="ECO:0007669"/>
    <property type="project" value="UniProtKB-KW"/>
</dbReference>
<dbReference type="GO" id="GO:0006644">
    <property type="term" value="P:phospholipid metabolic process"/>
    <property type="evidence" value="ECO:0007669"/>
    <property type="project" value="InterPro"/>
</dbReference>
<dbReference type="Gene3D" id="1.20.90.10">
    <property type="entry name" value="Phospholipase A2 domain"/>
    <property type="match status" value="1"/>
</dbReference>
<dbReference type="InterPro" id="IPR036444">
    <property type="entry name" value="PLipase_A2_dom_sf"/>
</dbReference>
<dbReference type="SUPFAM" id="SSF48619">
    <property type="entry name" value="Phospholipase A2, PLA2"/>
    <property type="match status" value="1"/>
</dbReference>
<evidence type="ECO:0000269" key="1">
    <source>
    </source>
</evidence>
<evidence type="ECO:0000269" key="2">
    <source>
    </source>
</evidence>
<evidence type="ECO:0000303" key="3">
    <source>
    </source>
</evidence>
<evidence type="ECO:0000305" key="4"/>
<evidence type="ECO:0000305" key="5">
    <source>
    </source>
</evidence>
<evidence type="ECO:0000305" key="6">
    <source>
    </source>
</evidence>
<keyword id="KW-0044">Antibiotic</keyword>
<keyword id="KW-0929">Antimicrobial</keyword>
<keyword id="KW-0903">Direct protein sequencing</keyword>
<keyword id="KW-1015">Disulfide bond</keyword>
<keyword id="KW-0959">Myotoxin</keyword>
<keyword id="KW-0964">Secreted</keyword>
<keyword id="KW-0800">Toxin</keyword>
<proteinExistence type="evidence at protein level"/>
<accession>P0DI92</accession>
<feature type="chain" id="PRO_0000412606" description="Phospholipase A2 homolog BmarPLA2" evidence="1 2">
    <location>
        <begin position="1"/>
        <end position="33" status="greater than"/>
    </location>
</feature>
<feature type="disulfide bond" evidence="4">
    <location>
        <begin position="26"/>
        <end status="unknown"/>
    </location>
</feature>
<feature type="disulfide bond" evidence="4">
    <location>
        <begin position="28"/>
        <end status="unknown"/>
    </location>
</feature>
<feature type="non-terminal residue">
    <location>
        <position position="33"/>
    </location>
</feature>